<keyword id="KW-1185">Reference proteome</keyword>
<keyword id="KW-0808">Transferase</keyword>
<protein>
    <recommendedName>
        <fullName>Uncharacterized protein MT2089</fullName>
    </recommendedName>
</protein>
<gene>
    <name type="ordered locus">MT2089</name>
</gene>
<reference key="1">
    <citation type="journal article" date="2002" name="J. Bacteriol.">
        <title>Whole-genome comparison of Mycobacterium tuberculosis clinical and laboratory strains.</title>
        <authorList>
            <person name="Fleischmann R.D."/>
            <person name="Alland D."/>
            <person name="Eisen J.A."/>
            <person name="Carpenter L."/>
            <person name="White O."/>
            <person name="Peterson J.D."/>
            <person name="DeBoy R.T."/>
            <person name="Dodson R.J."/>
            <person name="Gwinn M.L."/>
            <person name="Haft D.H."/>
            <person name="Hickey E.K."/>
            <person name="Kolonay J.F."/>
            <person name="Nelson W.C."/>
            <person name="Umayam L.A."/>
            <person name="Ermolaeva M.D."/>
            <person name="Salzberg S.L."/>
            <person name="Delcher A."/>
            <person name="Utterback T.R."/>
            <person name="Weidman J.F."/>
            <person name="Khouri H.M."/>
            <person name="Gill J."/>
            <person name="Mikula A."/>
            <person name="Bishai W."/>
            <person name="Jacobs W.R. Jr."/>
            <person name="Venter J.C."/>
            <person name="Fraser C.M."/>
        </authorList>
    </citation>
    <scope>NUCLEOTIDE SEQUENCE [LARGE SCALE GENOMIC DNA]</scope>
    <source>
        <strain>CDC 1551 / Oshkosh</strain>
    </source>
</reference>
<reference key="2">
    <citation type="journal article" date="2003" name="J. Exp. Med.">
        <title>Inhibition of respiration by nitric oxide induces a Mycobacterium tuberculosis dormancy program.</title>
        <authorList>
            <person name="Voskuil M.I."/>
            <person name="Schnappinger D."/>
            <person name="Visconti K.C."/>
            <person name="Harrell M.I."/>
            <person name="Dolganov G.M."/>
            <person name="Sherman D.R."/>
            <person name="Schoolnik G.K."/>
        </authorList>
    </citation>
    <scope>INDUCTION BY NITRIC OXIDE (NO) AND BY HYPOXIA</scope>
    <scope>DORMANCY REGULON</scope>
    <source>
        <strain>CDC 1551 / Oshkosh</strain>
    </source>
</reference>
<name>Y2030_MYCTO</name>
<proteinExistence type="evidence at transcript level"/>
<dbReference type="EMBL" id="AE000516">
    <property type="protein sequence ID" value="AAK46368.1"/>
    <property type="molecule type" value="Genomic_DNA"/>
</dbReference>
<dbReference type="PIR" id="E70942">
    <property type="entry name" value="E70942"/>
</dbReference>
<dbReference type="RefSeq" id="WP_003410178.1">
    <property type="nucleotide sequence ID" value="NZ_KK341227.1"/>
</dbReference>
<dbReference type="SMR" id="P9WLM0"/>
<dbReference type="KEGG" id="mtc:MT2089"/>
<dbReference type="PATRIC" id="fig|83331.31.peg.2253"/>
<dbReference type="HOGENOM" id="CLU_015623_1_0_11"/>
<dbReference type="Proteomes" id="UP000001020">
    <property type="component" value="Chromosome"/>
</dbReference>
<dbReference type="GO" id="GO:0016740">
    <property type="term" value="F:transferase activity"/>
    <property type="evidence" value="ECO:0007669"/>
    <property type="project" value="UniProtKB-KW"/>
</dbReference>
<dbReference type="GO" id="GO:0046677">
    <property type="term" value="P:response to antibiotic"/>
    <property type="evidence" value="ECO:0007669"/>
    <property type="project" value="InterPro"/>
</dbReference>
<dbReference type="CDD" id="cd14728">
    <property type="entry name" value="Ere-like"/>
    <property type="match status" value="1"/>
</dbReference>
<dbReference type="CDD" id="cd06223">
    <property type="entry name" value="PRTases_typeI"/>
    <property type="match status" value="1"/>
</dbReference>
<dbReference type="FunFam" id="3.30.1870.10:FF:000001">
    <property type="entry name" value="Erythromycin esterase"/>
    <property type="match status" value="1"/>
</dbReference>
<dbReference type="Gene3D" id="3.40.50.2020">
    <property type="match status" value="1"/>
</dbReference>
<dbReference type="Gene3D" id="1.20.1440.30">
    <property type="entry name" value="Biosynthetic Protein domain"/>
    <property type="match status" value="1"/>
</dbReference>
<dbReference type="Gene3D" id="3.40.1660.10">
    <property type="entry name" value="EreA-like (biosynthetic domain)"/>
    <property type="match status" value="1"/>
</dbReference>
<dbReference type="Gene3D" id="3.30.1870.10">
    <property type="entry name" value="EreA-like, domain 2"/>
    <property type="match status" value="1"/>
</dbReference>
<dbReference type="Gene3D" id="3.30.1310.20">
    <property type="entry name" value="PRTase-like"/>
    <property type="match status" value="1"/>
</dbReference>
<dbReference type="InterPro" id="IPR007815">
    <property type="entry name" value="Emycin_Estase"/>
</dbReference>
<dbReference type="InterPro" id="IPR052036">
    <property type="entry name" value="Hydrolase/PRTase-associated"/>
</dbReference>
<dbReference type="InterPro" id="IPR000836">
    <property type="entry name" value="PRibTrfase_dom"/>
</dbReference>
<dbReference type="InterPro" id="IPR029057">
    <property type="entry name" value="PRTase-like"/>
</dbReference>
<dbReference type="PANTHER" id="PTHR31299">
    <property type="entry name" value="ESTERASE, PUTATIVE (AFU_ORTHOLOGUE AFUA_1G05850)-RELATED"/>
    <property type="match status" value="1"/>
</dbReference>
<dbReference type="PANTHER" id="PTHR31299:SF0">
    <property type="entry name" value="ESTERASE, PUTATIVE (AFU_ORTHOLOGUE AFUA_1G05850)-RELATED"/>
    <property type="match status" value="1"/>
</dbReference>
<dbReference type="Pfam" id="PF05139">
    <property type="entry name" value="Erythro_esteras"/>
    <property type="match status" value="1"/>
</dbReference>
<dbReference type="Pfam" id="PF00156">
    <property type="entry name" value="Pribosyltran"/>
    <property type="match status" value="1"/>
</dbReference>
<dbReference type="SUPFAM" id="SSF159501">
    <property type="entry name" value="EreA/ChaN-like"/>
    <property type="match status" value="1"/>
</dbReference>
<dbReference type="SUPFAM" id="SSF53271">
    <property type="entry name" value="PRTase-like"/>
    <property type="match status" value="1"/>
</dbReference>
<organism>
    <name type="scientific">Mycobacterium tuberculosis (strain CDC 1551 / Oshkosh)</name>
    <dbReference type="NCBI Taxonomy" id="83331"/>
    <lineage>
        <taxon>Bacteria</taxon>
        <taxon>Bacillati</taxon>
        <taxon>Actinomycetota</taxon>
        <taxon>Actinomycetes</taxon>
        <taxon>Mycobacteriales</taxon>
        <taxon>Mycobacteriaceae</taxon>
        <taxon>Mycobacterium</taxon>
        <taxon>Mycobacterium tuberculosis complex</taxon>
    </lineage>
</organism>
<sequence>MLMTAAADVTRRSPRRVFRDRREAGRVLAELLAAYRDQPDVIVLGLARGGLPVAWEVAAALHAPLDAFVVRKLGAPGHDEFAVGALASGGRVVVNDDVVRGLRITPQQLRDIAEREGRELLRRESAYRGERPPTDITGKTVIVVDDGLATGASMFAAVQALRDAQPAQIVIAVPAAPESTCREFAGLVDDVVCATMPTPFLAVGESFWDFRQVTDEEVRRLLATPTAGPSLRRPAASTAADVLRRVAIDAPGGVPTHEVLAELVGDARIVLIGESSHGTHEFYQARAAMTQWLIEEKGFGAVAAEADWPDAYRVNRYVRGLGEDTNADEALSGFERFPAWMWRNTVVRDFVEWLRTRNQRYESGALRQAGFYGLDLYSLHRSIQEVISYLDKVDPRAAARARARYACFDHACADDGQAYGFAAAFGAGPSCEREAVEQLVDVQRNALAYARQDGLLAEDELFYAQQNAQTVRDAEVYYRAMFSGRVTSWNLRDQHMAQTLGSLLTHLDRHLDAPPARIVVWAHNSHVGDARATEVWADGQLTLGQIVRERYGDESRSIGFSTYTGTVTAASEWGGIAQRKAVRPALHGSVEELFHQTADSFLVSARLSRDAEAPLDVVRLGRAIGVVYLPATERQSHYLHVRPADQFDAMIHIDQTRALEPLEVTSRWIAGENPETYPTGL</sequence>
<feature type="chain" id="PRO_0000427455" description="Uncharacterized protein MT2089">
    <location>
        <begin position="1"/>
        <end position="681"/>
    </location>
</feature>
<evidence type="ECO:0000269" key="1">
    <source>
    </source>
</evidence>
<evidence type="ECO:0000305" key="2"/>
<accession>P9WLM0</accession>
<accession>L0T8K6</accession>
<accession>O53475</accession>
<accession>Q7D7L3</accession>
<comment type="induction">
    <text evidence="1">A member of the dormancy regulon. Induced in response to reduced oxygen tension (hypoxia) and low levels of nitric oxide (NO).</text>
</comment>
<comment type="similarity">
    <text evidence="2">In the N-terminal section; belongs to the purine/pyrimidine phosphoribosyltransferase family.</text>
</comment>